<sequence>MASKLLRAVILGPPGSGKGTVCQRIAQNFGLQHLSSGHFLRENIKANTEVGDMAKQYIEKGLLVPDHVITRLMLLELENRRGEHWLLDGFPRTLVQAEALDRLCDLDLVITLNIPFETLKDRLSRRWIHPPSGRVYNLDFNPPHVHGMDDVTGEPLVQQEDDKPEAVAARLRQYKDVAKPVIELYKSRGVLHQFSGTETNKIWPYVYTLFSNKITPVQSKEAY</sequence>
<accession>Q0VCP1</accession>
<reference key="1">
    <citation type="submission" date="2006-08" db="EMBL/GenBank/DDBJ databases">
        <authorList>
            <consortium name="NIH - Mammalian Gene Collection (MGC) project"/>
        </authorList>
    </citation>
    <scope>NUCLEOTIDE SEQUENCE [LARGE SCALE MRNA]</scope>
    <source>
        <strain>Hereford</strain>
        <tissue>Fetal pons</tissue>
    </source>
</reference>
<feature type="chain" id="PRO_0000262883" description="Adenylate kinase 4, mitochondrial">
    <location>
        <begin position="1"/>
        <end position="223"/>
    </location>
</feature>
<feature type="region of interest" description="NMP" evidence="3">
    <location>
        <begin position="35"/>
        <end position="64"/>
    </location>
</feature>
<feature type="region of interest" description="LID" evidence="3">
    <location>
        <begin position="125"/>
        <end position="162"/>
    </location>
</feature>
<feature type="binding site" evidence="3">
    <location>
        <begin position="15"/>
        <end position="20"/>
    </location>
    <ligand>
        <name>a ribonucleoside 5'-triphosphate</name>
        <dbReference type="ChEBI" id="CHEBI:61557"/>
    </ligand>
</feature>
<feature type="binding site" evidence="3">
    <location>
        <position position="36"/>
    </location>
    <ligand>
        <name>AMP</name>
        <dbReference type="ChEBI" id="CHEBI:456215"/>
    </ligand>
</feature>
<feature type="binding site" evidence="3">
    <location>
        <position position="41"/>
    </location>
    <ligand>
        <name>AMP</name>
        <dbReference type="ChEBI" id="CHEBI:456215"/>
    </ligand>
</feature>
<feature type="binding site" evidence="3">
    <location>
        <begin position="62"/>
        <end position="64"/>
    </location>
    <ligand>
        <name>AMP</name>
        <dbReference type="ChEBI" id="CHEBI:456215"/>
    </ligand>
</feature>
<feature type="binding site" evidence="3">
    <location>
        <begin position="89"/>
        <end position="92"/>
    </location>
    <ligand>
        <name>AMP</name>
        <dbReference type="ChEBI" id="CHEBI:456215"/>
    </ligand>
</feature>
<feature type="binding site" evidence="3">
    <location>
        <position position="96"/>
    </location>
    <ligand>
        <name>AMP</name>
        <dbReference type="ChEBI" id="CHEBI:456215"/>
    </ligand>
</feature>
<feature type="binding site" evidence="3">
    <location>
        <position position="126"/>
    </location>
    <ligand>
        <name>a ribonucleoside 5'-triphosphate</name>
        <dbReference type="ChEBI" id="CHEBI:61557"/>
    </ligand>
</feature>
<feature type="binding site" evidence="3">
    <location>
        <begin position="135"/>
        <end position="136"/>
    </location>
    <ligand>
        <name>a ribonucleoside 5'-triphosphate</name>
        <dbReference type="ChEBI" id="CHEBI:61557"/>
    </ligand>
</feature>
<feature type="binding site" evidence="3">
    <location>
        <position position="170"/>
    </location>
    <ligand>
        <name>AMP</name>
        <dbReference type="ChEBI" id="CHEBI:456215"/>
    </ligand>
</feature>
<feature type="binding site" evidence="3">
    <location>
        <position position="199"/>
    </location>
    <ligand>
        <name>a ribonucleoside 5'-triphosphate</name>
        <dbReference type="ChEBI" id="CHEBI:61557"/>
    </ligand>
</feature>
<feature type="modified residue" description="N6-succinyllysine" evidence="2">
    <location>
        <position position="60"/>
    </location>
</feature>
<feature type="modified residue" description="N6-acetyllysine" evidence="2">
    <location>
        <position position="175"/>
    </location>
</feature>
<feature type="modified residue" description="N6-acetyllysine; alternate" evidence="2">
    <location>
        <position position="179"/>
    </location>
</feature>
<feature type="modified residue" description="N6-succinyllysine; alternate" evidence="2">
    <location>
        <position position="179"/>
    </location>
</feature>
<feature type="modified residue" description="N6-acetyllysine; alternate" evidence="2">
    <location>
        <position position="186"/>
    </location>
</feature>
<feature type="modified residue" description="N6-succinyllysine; alternate" evidence="2">
    <location>
        <position position="186"/>
    </location>
</feature>
<name>KAD4_BOVIN</name>
<comment type="function">
    <text evidence="1">Broad-specificity mitochondrial nucleoside phosphate kinase involved in cellular nucleotide homeostasis by catalyzing nucleoside-phosphate interconversions. Similar to other adenylate kinases, preferentially catalyzes the phosphorylation of the nucleoside monophosphate AMP with ATP as phosphate donor to produce ADP. Phosphorylates only AMP when using GTP as phosphate donor. In vitro, can also catalyze the phosphorylation of CMP, dAMP and dCMP and use GTP as an alternate phosphate donor. Moreover, exhibits a diphosphate kinase activity, producing ATP, CTP, GTP, UTP, TTP, dATP, dCTP and dGTP from the corresponding diphosphate substrates with either ATP or GTP as phosphate donors. Plays a role in controlling cellular ATP levels by regulating phosphorylation and activation of the energy sensor protein kinase AMPK. Plays a protective role in the cellular response to oxidative stress.</text>
</comment>
<comment type="catalytic activity">
    <reaction evidence="1">
        <text>a ribonucleoside 5'-phosphate + ATP = a ribonucleoside 5'-diphosphate + ADP</text>
        <dbReference type="Rhea" id="RHEA:24036"/>
        <dbReference type="ChEBI" id="CHEBI:30616"/>
        <dbReference type="ChEBI" id="CHEBI:57930"/>
        <dbReference type="ChEBI" id="CHEBI:58043"/>
        <dbReference type="ChEBI" id="CHEBI:456216"/>
        <dbReference type="EC" id="2.7.4.4"/>
    </reaction>
</comment>
<comment type="catalytic activity">
    <reaction evidence="1">
        <text>AMP + ATP = 2 ADP</text>
        <dbReference type="Rhea" id="RHEA:12973"/>
        <dbReference type="ChEBI" id="CHEBI:30616"/>
        <dbReference type="ChEBI" id="CHEBI:456215"/>
        <dbReference type="ChEBI" id="CHEBI:456216"/>
    </reaction>
</comment>
<comment type="catalytic activity">
    <reaction evidence="1">
        <text>GTP + AMP = GDP + ADP</text>
        <dbReference type="Rhea" id="RHEA:29863"/>
        <dbReference type="ChEBI" id="CHEBI:37565"/>
        <dbReference type="ChEBI" id="CHEBI:58189"/>
        <dbReference type="ChEBI" id="CHEBI:456215"/>
        <dbReference type="ChEBI" id="CHEBI:456216"/>
    </reaction>
</comment>
<comment type="catalytic activity">
    <reaction evidence="1">
        <text>CMP + ATP = CDP + ADP</text>
        <dbReference type="Rhea" id="RHEA:11600"/>
        <dbReference type="ChEBI" id="CHEBI:30616"/>
        <dbReference type="ChEBI" id="CHEBI:58069"/>
        <dbReference type="ChEBI" id="CHEBI:60377"/>
        <dbReference type="ChEBI" id="CHEBI:456216"/>
    </reaction>
</comment>
<comment type="catalytic activity">
    <reaction evidence="1">
        <text>GTP + CMP = CDP + GDP</text>
        <dbReference type="Rhea" id="RHEA:79855"/>
        <dbReference type="ChEBI" id="CHEBI:37565"/>
        <dbReference type="ChEBI" id="CHEBI:58069"/>
        <dbReference type="ChEBI" id="CHEBI:58189"/>
        <dbReference type="ChEBI" id="CHEBI:60377"/>
    </reaction>
</comment>
<comment type="catalytic activity">
    <reaction evidence="1">
        <text>dAMP + ATP = dADP + ADP</text>
        <dbReference type="Rhea" id="RHEA:23100"/>
        <dbReference type="ChEBI" id="CHEBI:30616"/>
        <dbReference type="ChEBI" id="CHEBI:57667"/>
        <dbReference type="ChEBI" id="CHEBI:58245"/>
        <dbReference type="ChEBI" id="CHEBI:456216"/>
    </reaction>
</comment>
<comment type="catalytic activity">
    <reaction evidence="1">
        <text>dCMP + ATP = dCDP + ADP</text>
        <dbReference type="Rhea" id="RHEA:25094"/>
        <dbReference type="ChEBI" id="CHEBI:30616"/>
        <dbReference type="ChEBI" id="CHEBI:57566"/>
        <dbReference type="ChEBI" id="CHEBI:58593"/>
        <dbReference type="ChEBI" id="CHEBI:456216"/>
    </reaction>
</comment>
<comment type="catalytic activity">
    <reaction evidence="1">
        <text>a 2'-deoxyribonucleoside 5'-diphosphate + ATP = a 2'-deoxyribonucleoside 5'-triphosphate + ADP</text>
        <dbReference type="Rhea" id="RHEA:44640"/>
        <dbReference type="ChEBI" id="CHEBI:30616"/>
        <dbReference type="ChEBI" id="CHEBI:61560"/>
        <dbReference type="ChEBI" id="CHEBI:73316"/>
        <dbReference type="ChEBI" id="CHEBI:456216"/>
        <dbReference type="EC" id="2.7.4.6"/>
    </reaction>
</comment>
<comment type="catalytic activity">
    <reaction evidence="1">
        <text>a ribonucleoside 5'-diphosphate + ATP = a ribonucleoside 5'-triphosphate + ADP</text>
        <dbReference type="Rhea" id="RHEA:18113"/>
        <dbReference type="ChEBI" id="CHEBI:30616"/>
        <dbReference type="ChEBI" id="CHEBI:57930"/>
        <dbReference type="ChEBI" id="CHEBI:61557"/>
        <dbReference type="ChEBI" id="CHEBI:456216"/>
        <dbReference type="EC" id="2.7.4.6"/>
    </reaction>
</comment>
<comment type="catalytic activity">
    <reaction evidence="1">
        <text>GDP + ATP = GTP + ADP</text>
        <dbReference type="Rhea" id="RHEA:27686"/>
        <dbReference type="ChEBI" id="CHEBI:30616"/>
        <dbReference type="ChEBI" id="CHEBI:37565"/>
        <dbReference type="ChEBI" id="CHEBI:58189"/>
        <dbReference type="ChEBI" id="CHEBI:456216"/>
        <dbReference type="EC" id="2.7.4.6"/>
    </reaction>
</comment>
<comment type="catalytic activity">
    <reaction evidence="1">
        <text>CDP + GTP = CTP + GDP</text>
        <dbReference type="Rhea" id="RHEA:79859"/>
        <dbReference type="ChEBI" id="CHEBI:37563"/>
        <dbReference type="ChEBI" id="CHEBI:37565"/>
        <dbReference type="ChEBI" id="CHEBI:58069"/>
        <dbReference type="ChEBI" id="CHEBI:58189"/>
    </reaction>
</comment>
<comment type="catalytic activity">
    <reaction evidence="1">
        <text>CDP + ATP = CTP + ADP</text>
        <dbReference type="Rhea" id="RHEA:25237"/>
        <dbReference type="ChEBI" id="CHEBI:30616"/>
        <dbReference type="ChEBI" id="CHEBI:37563"/>
        <dbReference type="ChEBI" id="CHEBI:58069"/>
        <dbReference type="ChEBI" id="CHEBI:456216"/>
        <dbReference type="EC" id="2.7.4.6"/>
    </reaction>
</comment>
<comment type="catalytic activity">
    <reaction evidence="1">
        <text>UDP + ATP = UTP + ADP</text>
        <dbReference type="Rhea" id="RHEA:25098"/>
        <dbReference type="ChEBI" id="CHEBI:30616"/>
        <dbReference type="ChEBI" id="CHEBI:46398"/>
        <dbReference type="ChEBI" id="CHEBI:58223"/>
        <dbReference type="ChEBI" id="CHEBI:456216"/>
        <dbReference type="EC" id="2.7.4.6"/>
    </reaction>
</comment>
<comment type="catalytic activity">
    <reaction evidence="1">
        <text>GTP + UDP = UTP + GDP</text>
        <dbReference type="Rhea" id="RHEA:79863"/>
        <dbReference type="ChEBI" id="CHEBI:37565"/>
        <dbReference type="ChEBI" id="CHEBI:46398"/>
        <dbReference type="ChEBI" id="CHEBI:58189"/>
        <dbReference type="ChEBI" id="CHEBI:58223"/>
    </reaction>
</comment>
<comment type="catalytic activity">
    <reaction evidence="1">
        <text>dADP + GTP = dATP + GDP</text>
        <dbReference type="Rhea" id="RHEA:79871"/>
        <dbReference type="ChEBI" id="CHEBI:37565"/>
        <dbReference type="ChEBI" id="CHEBI:57667"/>
        <dbReference type="ChEBI" id="CHEBI:58189"/>
        <dbReference type="ChEBI" id="CHEBI:61404"/>
    </reaction>
</comment>
<comment type="catalytic activity">
    <reaction evidence="1">
        <text>dCDP + GTP = dCTP + GDP</text>
        <dbReference type="Rhea" id="RHEA:79875"/>
        <dbReference type="ChEBI" id="CHEBI:37565"/>
        <dbReference type="ChEBI" id="CHEBI:58189"/>
        <dbReference type="ChEBI" id="CHEBI:58593"/>
        <dbReference type="ChEBI" id="CHEBI:61481"/>
    </reaction>
</comment>
<comment type="catalytic activity">
    <reaction evidence="1">
        <text>dCDP + ATP = dCTP + ADP</text>
        <dbReference type="Rhea" id="RHEA:27678"/>
        <dbReference type="ChEBI" id="CHEBI:30616"/>
        <dbReference type="ChEBI" id="CHEBI:58593"/>
        <dbReference type="ChEBI" id="CHEBI:61481"/>
        <dbReference type="ChEBI" id="CHEBI:456216"/>
        <dbReference type="EC" id="2.7.4.6"/>
    </reaction>
</comment>
<comment type="catalytic activity">
    <reaction evidence="1">
        <text>dGDP + ATP = dGTP + ADP</text>
        <dbReference type="Rhea" id="RHEA:27690"/>
        <dbReference type="ChEBI" id="CHEBI:30616"/>
        <dbReference type="ChEBI" id="CHEBI:58595"/>
        <dbReference type="ChEBI" id="CHEBI:61429"/>
        <dbReference type="ChEBI" id="CHEBI:456216"/>
        <dbReference type="EC" id="2.7.4.6"/>
    </reaction>
</comment>
<comment type="catalytic activity">
    <reaction evidence="1">
        <text>dTDP + GTP = dTTP + GDP</text>
        <dbReference type="Rhea" id="RHEA:79867"/>
        <dbReference type="ChEBI" id="CHEBI:37565"/>
        <dbReference type="ChEBI" id="CHEBI:37568"/>
        <dbReference type="ChEBI" id="CHEBI:58189"/>
        <dbReference type="ChEBI" id="CHEBI:58369"/>
    </reaction>
</comment>
<comment type="catalytic activity">
    <reaction evidence="1">
        <text>dTDP + ATP = dTTP + ADP</text>
        <dbReference type="Rhea" id="RHEA:27682"/>
        <dbReference type="ChEBI" id="CHEBI:30616"/>
        <dbReference type="ChEBI" id="CHEBI:37568"/>
        <dbReference type="ChEBI" id="CHEBI:58369"/>
        <dbReference type="ChEBI" id="CHEBI:456216"/>
        <dbReference type="EC" id="2.7.4.6"/>
    </reaction>
</comment>
<comment type="subunit">
    <text evidence="1">Monomer. Interacts with SLC25A5/ANT2.</text>
</comment>
<comment type="subcellular location">
    <subcellularLocation>
        <location evidence="1 3">Mitochondrion matrix</location>
    </subcellularLocation>
</comment>
<comment type="domain">
    <text evidence="3">Consists of three domains, a large central CORE domain and two small peripheral domains, NMPbind and LID, which undergo movements during catalysis. The LID domain closes over the site of phosphoryl transfer upon GTP/ATP binding. Assembling and dissambling the active center during each catalytic cycle provides an effective means to prevent GTP/ATP hydrolysis.</text>
</comment>
<comment type="similarity">
    <text evidence="3">Belongs to the adenylate kinase family. AK3 subfamily.</text>
</comment>
<protein>
    <recommendedName>
        <fullName evidence="1">Adenylate kinase 4, mitochondrial</fullName>
        <ecNumber evidence="1">2.7.4.4</ecNumber>
        <ecNumber evidence="1">2.7.4.6</ecNumber>
    </recommendedName>
    <alternativeName>
        <fullName evidence="3">Adenylate kinase 3-like</fullName>
    </alternativeName>
    <alternativeName>
        <fullName evidence="3">GTP:AMP phosphotransferase AK4</fullName>
    </alternativeName>
</protein>
<keyword id="KW-0007">Acetylation</keyword>
<keyword id="KW-0067">ATP-binding</keyword>
<keyword id="KW-0342">GTP-binding</keyword>
<keyword id="KW-0418">Kinase</keyword>
<keyword id="KW-0496">Mitochondrion</keyword>
<keyword id="KW-0547">Nucleotide-binding</keyword>
<keyword id="KW-1185">Reference proteome</keyword>
<keyword id="KW-0808">Transferase</keyword>
<gene>
    <name evidence="1" type="primary">AK4</name>
</gene>
<organism>
    <name type="scientific">Bos taurus</name>
    <name type="common">Bovine</name>
    <dbReference type="NCBI Taxonomy" id="9913"/>
    <lineage>
        <taxon>Eukaryota</taxon>
        <taxon>Metazoa</taxon>
        <taxon>Chordata</taxon>
        <taxon>Craniata</taxon>
        <taxon>Vertebrata</taxon>
        <taxon>Euteleostomi</taxon>
        <taxon>Mammalia</taxon>
        <taxon>Eutheria</taxon>
        <taxon>Laurasiatheria</taxon>
        <taxon>Artiodactyla</taxon>
        <taxon>Ruminantia</taxon>
        <taxon>Pecora</taxon>
        <taxon>Bovidae</taxon>
        <taxon>Bovinae</taxon>
        <taxon>Bos</taxon>
    </lineage>
</organism>
<evidence type="ECO:0000250" key="1">
    <source>
        <dbReference type="UniProtKB" id="P27144"/>
    </source>
</evidence>
<evidence type="ECO:0000250" key="2">
    <source>
        <dbReference type="UniProtKB" id="Q9WUR9"/>
    </source>
</evidence>
<evidence type="ECO:0000255" key="3">
    <source>
        <dbReference type="HAMAP-Rule" id="MF_03170"/>
    </source>
</evidence>
<dbReference type="EC" id="2.7.4.4" evidence="1"/>
<dbReference type="EC" id="2.7.4.6" evidence="1"/>
<dbReference type="EMBL" id="BC120077">
    <property type="protein sequence ID" value="AAI20078.1"/>
    <property type="molecule type" value="mRNA"/>
</dbReference>
<dbReference type="RefSeq" id="NP_001071401.1">
    <property type="nucleotide sequence ID" value="NM_001077933.2"/>
</dbReference>
<dbReference type="RefSeq" id="XP_005204514.1">
    <property type="nucleotide sequence ID" value="XM_005204457.3"/>
</dbReference>
<dbReference type="RefSeq" id="XP_010801745.1">
    <property type="nucleotide sequence ID" value="XM_010803443.2"/>
</dbReference>
<dbReference type="SMR" id="Q0VCP1"/>
<dbReference type="FunCoup" id="Q0VCP1">
    <property type="interactions" value="681"/>
</dbReference>
<dbReference type="STRING" id="9913.ENSBTAP00000040941"/>
<dbReference type="PaxDb" id="9913-ENSBTAP00000040941"/>
<dbReference type="GeneID" id="517063"/>
<dbReference type="KEGG" id="bta:517063"/>
<dbReference type="CTD" id="205"/>
<dbReference type="VEuPathDB" id="HostDB:ENSBTAG00000030674"/>
<dbReference type="eggNOG" id="KOG3078">
    <property type="taxonomic scope" value="Eukaryota"/>
</dbReference>
<dbReference type="HOGENOM" id="CLU_032354_1_1_1"/>
<dbReference type="InParanoid" id="Q0VCP1"/>
<dbReference type="OMA" id="IKVENTM"/>
<dbReference type="OrthoDB" id="439792at2759"/>
<dbReference type="TreeFam" id="TF312916"/>
<dbReference type="Reactome" id="R-BTA-499943">
    <property type="pathway name" value="Interconversion of nucleotide di- and triphosphates"/>
</dbReference>
<dbReference type="SABIO-RK" id="Q0VCP1"/>
<dbReference type="Proteomes" id="UP000009136">
    <property type="component" value="Chromosome 3"/>
</dbReference>
<dbReference type="Bgee" id="ENSBTAG00000030674">
    <property type="expression patterns" value="Expressed in metanephros cortex and 102 other cell types or tissues"/>
</dbReference>
<dbReference type="GO" id="GO:0005737">
    <property type="term" value="C:cytoplasm"/>
    <property type="evidence" value="ECO:0000318"/>
    <property type="project" value="GO_Central"/>
</dbReference>
<dbReference type="GO" id="GO:0005759">
    <property type="term" value="C:mitochondrial matrix"/>
    <property type="evidence" value="ECO:0000318"/>
    <property type="project" value="GO_Central"/>
</dbReference>
<dbReference type="GO" id="GO:0004017">
    <property type="term" value="F:adenylate kinase activity"/>
    <property type="evidence" value="ECO:0007669"/>
    <property type="project" value="InterPro"/>
</dbReference>
<dbReference type="GO" id="GO:0005524">
    <property type="term" value="F:ATP binding"/>
    <property type="evidence" value="ECO:0007669"/>
    <property type="project" value="UniProtKB-KW"/>
</dbReference>
<dbReference type="GO" id="GO:0036430">
    <property type="term" value="F:CMP kinase activity"/>
    <property type="evidence" value="ECO:0007669"/>
    <property type="project" value="RHEA"/>
</dbReference>
<dbReference type="GO" id="GO:0036431">
    <property type="term" value="F:dCMP kinase activity"/>
    <property type="evidence" value="ECO:0007669"/>
    <property type="project" value="RHEA"/>
</dbReference>
<dbReference type="GO" id="GO:0047506">
    <property type="term" value="F:deoxyadenylate kinase activity"/>
    <property type="evidence" value="ECO:0007669"/>
    <property type="project" value="RHEA"/>
</dbReference>
<dbReference type="GO" id="GO:0005525">
    <property type="term" value="F:GTP binding"/>
    <property type="evidence" value="ECO:0007669"/>
    <property type="project" value="UniProtKB-KW"/>
</dbReference>
<dbReference type="GO" id="GO:0004550">
    <property type="term" value="F:nucleoside diphosphate kinase activity"/>
    <property type="evidence" value="ECO:0000250"/>
    <property type="project" value="UniProtKB"/>
</dbReference>
<dbReference type="GO" id="GO:0046899">
    <property type="term" value="F:nucleoside triphosphate adenylate kinase activity"/>
    <property type="evidence" value="ECO:0007669"/>
    <property type="project" value="UniProtKB-UniRule"/>
</dbReference>
<dbReference type="GO" id="GO:0006172">
    <property type="term" value="P:ADP biosynthetic process"/>
    <property type="evidence" value="ECO:0007669"/>
    <property type="project" value="UniProtKB-UniRule"/>
</dbReference>
<dbReference type="GO" id="GO:0046033">
    <property type="term" value="P:AMP metabolic process"/>
    <property type="evidence" value="ECO:0000318"/>
    <property type="project" value="GO_Central"/>
</dbReference>
<dbReference type="GO" id="GO:0046034">
    <property type="term" value="P:ATP metabolic process"/>
    <property type="evidence" value="ECO:0007669"/>
    <property type="project" value="UniProtKB-UniRule"/>
</dbReference>
<dbReference type="GO" id="GO:0071456">
    <property type="term" value="P:cellular response to hypoxia"/>
    <property type="evidence" value="ECO:0000250"/>
    <property type="project" value="UniProtKB"/>
</dbReference>
<dbReference type="GO" id="GO:0046039">
    <property type="term" value="P:GTP metabolic process"/>
    <property type="evidence" value="ECO:0007669"/>
    <property type="project" value="UniProtKB-UniRule"/>
</dbReference>
<dbReference type="GO" id="GO:0009142">
    <property type="term" value="P:nucleoside triphosphate biosynthetic process"/>
    <property type="evidence" value="ECO:0000318"/>
    <property type="project" value="GO_Central"/>
</dbReference>
<dbReference type="GO" id="GO:0002082">
    <property type="term" value="P:regulation of oxidative phosphorylation"/>
    <property type="evidence" value="ECO:0000250"/>
    <property type="project" value="UniProtKB"/>
</dbReference>
<dbReference type="GO" id="GO:0009188">
    <property type="term" value="P:ribonucleoside diphosphate biosynthetic process"/>
    <property type="evidence" value="ECO:0000250"/>
    <property type="project" value="UniProtKB"/>
</dbReference>
<dbReference type="CDD" id="cd01428">
    <property type="entry name" value="ADK"/>
    <property type="match status" value="1"/>
</dbReference>
<dbReference type="FunFam" id="3.40.50.300:FF:000106">
    <property type="entry name" value="Adenylate kinase mitochondrial"/>
    <property type="match status" value="1"/>
</dbReference>
<dbReference type="Gene3D" id="3.40.50.300">
    <property type="entry name" value="P-loop containing nucleotide triphosphate hydrolases"/>
    <property type="match status" value="1"/>
</dbReference>
<dbReference type="HAMAP" id="MF_00235">
    <property type="entry name" value="Adenylate_kinase_Adk"/>
    <property type="match status" value="1"/>
</dbReference>
<dbReference type="HAMAP" id="MF_03169">
    <property type="entry name" value="Adenylate_kinase_AK3"/>
    <property type="match status" value="1"/>
</dbReference>
<dbReference type="HAMAP" id="MF_03170">
    <property type="entry name" value="Adenylate_kinase_AK4"/>
    <property type="match status" value="1"/>
</dbReference>
<dbReference type="InterPro" id="IPR006259">
    <property type="entry name" value="Adenyl_kin_sub"/>
</dbReference>
<dbReference type="InterPro" id="IPR000850">
    <property type="entry name" value="Adenylat/UMP-CMP_kin"/>
</dbReference>
<dbReference type="InterPro" id="IPR033690">
    <property type="entry name" value="Adenylat_kinase_CS"/>
</dbReference>
<dbReference type="InterPro" id="IPR007862">
    <property type="entry name" value="Adenylate_kinase_lid-dom"/>
</dbReference>
<dbReference type="InterPro" id="IPR036193">
    <property type="entry name" value="ADK_active_lid_dom_sf"/>
</dbReference>
<dbReference type="InterPro" id="IPR028586">
    <property type="entry name" value="AK3/Ak4_mitochondrial"/>
</dbReference>
<dbReference type="InterPro" id="IPR028585">
    <property type="entry name" value="AK4_mitochondrial"/>
</dbReference>
<dbReference type="InterPro" id="IPR027417">
    <property type="entry name" value="P-loop_NTPase"/>
</dbReference>
<dbReference type="NCBIfam" id="TIGR01351">
    <property type="entry name" value="adk"/>
    <property type="match status" value="1"/>
</dbReference>
<dbReference type="PANTHER" id="PTHR23359">
    <property type="entry name" value="NUCLEOTIDE KINASE"/>
    <property type="match status" value="1"/>
</dbReference>
<dbReference type="Pfam" id="PF00406">
    <property type="entry name" value="ADK"/>
    <property type="match status" value="1"/>
</dbReference>
<dbReference type="Pfam" id="PF05191">
    <property type="entry name" value="ADK_lid"/>
    <property type="match status" value="1"/>
</dbReference>
<dbReference type="PRINTS" id="PR00094">
    <property type="entry name" value="ADENYLTKNASE"/>
</dbReference>
<dbReference type="SUPFAM" id="SSF57774">
    <property type="entry name" value="Microbial and mitochondrial ADK, insert 'zinc finger' domain"/>
    <property type="match status" value="1"/>
</dbReference>
<dbReference type="SUPFAM" id="SSF52540">
    <property type="entry name" value="P-loop containing nucleoside triphosphate hydrolases"/>
    <property type="match status" value="1"/>
</dbReference>
<dbReference type="PROSITE" id="PS00113">
    <property type="entry name" value="ADENYLATE_KINASE"/>
    <property type="match status" value="1"/>
</dbReference>
<proteinExistence type="evidence at transcript level"/>